<reference key="1">
    <citation type="journal article" date="2001" name="DNA Res.">
        <title>Complete genome sequence of an aerobic thermoacidophilic Crenarchaeon, Sulfolobus tokodaii strain7.</title>
        <authorList>
            <person name="Kawarabayasi Y."/>
            <person name="Hino Y."/>
            <person name="Horikawa H."/>
            <person name="Jin-no K."/>
            <person name="Takahashi M."/>
            <person name="Sekine M."/>
            <person name="Baba S."/>
            <person name="Ankai A."/>
            <person name="Kosugi H."/>
            <person name="Hosoyama A."/>
            <person name="Fukui S."/>
            <person name="Nagai Y."/>
            <person name="Nishijima K."/>
            <person name="Otsuka R."/>
            <person name="Nakazawa H."/>
            <person name="Takamiya M."/>
            <person name="Kato Y."/>
            <person name="Yoshizawa T."/>
            <person name="Tanaka T."/>
            <person name="Kudoh Y."/>
            <person name="Yamazaki J."/>
            <person name="Kushida N."/>
            <person name="Oguchi A."/>
            <person name="Aoki K."/>
            <person name="Masuda S."/>
            <person name="Yanagii M."/>
            <person name="Nishimura M."/>
            <person name="Yamagishi A."/>
            <person name="Oshima T."/>
            <person name="Kikuchi H."/>
        </authorList>
    </citation>
    <scope>NUCLEOTIDE SEQUENCE [LARGE SCALE GENOMIC DNA]</scope>
    <source>
        <strain>DSM 16993 / JCM 10545 / NBRC 100140 / 7</strain>
    </source>
</reference>
<keyword id="KW-0031">Aminopeptidase</keyword>
<keyword id="KW-0963">Cytoplasm</keyword>
<keyword id="KW-0378">Hydrolase</keyword>
<keyword id="KW-0479">Metal-binding</keyword>
<keyword id="KW-0482">Metalloprotease</keyword>
<keyword id="KW-0645">Protease</keyword>
<keyword id="KW-1185">Reference proteome</keyword>
<keyword id="KW-0862">Zinc</keyword>
<evidence type="ECO:0000250" key="1"/>
<evidence type="ECO:0000255" key="2">
    <source>
        <dbReference type="PROSITE-ProRule" id="PRU10095"/>
    </source>
</evidence>
<evidence type="ECO:0000305" key="3"/>
<dbReference type="EC" id="3.4.11.-"/>
<dbReference type="EMBL" id="BA000023">
    <property type="protein sequence ID" value="BAB65621.1"/>
    <property type="molecule type" value="Genomic_DNA"/>
</dbReference>
<dbReference type="RefSeq" id="WP_010978604.1">
    <property type="nucleotide sequence ID" value="NC_003106.2"/>
</dbReference>
<dbReference type="SMR" id="Q974N6"/>
<dbReference type="STRING" id="273063.STK_06230"/>
<dbReference type="MEROPS" id="M01.021"/>
<dbReference type="GeneID" id="1458571"/>
<dbReference type="KEGG" id="sto:STK_06230"/>
<dbReference type="PATRIC" id="fig|273063.9.peg.707"/>
<dbReference type="eggNOG" id="arCOG02969">
    <property type="taxonomic scope" value="Archaea"/>
</dbReference>
<dbReference type="OrthoDB" id="139771at2157"/>
<dbReference type="Proteomes" id="UP000001015">
    <property type="component" value="Chromosome"/>
</dbReference>
<dbReference type="GO" id="GO:0005737">
    <property type="term" value="C:cytoplasm"/>
    <property type="evidence" value="ECO:0007669"/>
    <property type="project" value="UniProtKB-SubCell"/>
</dbReference>
<dbReference type="GO" id="GO:0005615">
    <property type="term" value="C:extracellular space"/>
    <property type="evidence" value="ECO:0007669"/>
    <property type="project" value="TreeGrafter"/>
</dbReference>
<dbReference type="GO" id="GO:0016020">
    <property type="term" value="C:membrane"/>
    <property type="evidence" value="ECO:0007669"/>
    <property type="project" value="TreeGrafter"/>
</dbReference>
<dbReference type="GO" id="GO:0070006">
    <property type="term" value="F:metalloaminopeptidase activity"/>
    <property type="evidence" value="ECO:0007669"/>
    <property type="project" value="TreeGrafter"/>
</dbReference>
<dbReference type="GO" id="GO:0042277">
    <property type="term" value="F:peptide binding"/>
    <property type="evidence" value="ECO:0007669"/>
    <property type="project" value="TreeGrafter"/>
</dbReference>
<dbReference type="GO" id="GO:0008270">
    <property type="term" value="F:zinc ion binding"/>
    <property type="evidence" value="ECO:0007669"/>
    <property type="project" value="InterPro"/>
</dbReference>
<dbReference type="GO" id="GO:0043171">
    <property type="term" value="P:peptide catabolic process"/>
    <property type="evidence" value="ECO:0007669"/>
    <property type="project" value="TreeGrafter"/>
</dbReference>
<dbReference type="GO" id="GO:0006508">
    <property type="term" value="P:proteolysis"/>
    <property type="evidence" value="ECO:0007669"/>
    <property type="project" value="UniProtKB-KW"/>
</dbReference>
<dbReference type="CDD" id="cd09601">
    <property type="entry name" value="M1_APN-Q_like"/>
    <property type="match status" value="1"/>
</dbReference>
<dbReference type="FunFam" id="1.10.390.10:FF:000006">
    <property type="entry name" value="Puromycin-sensitive aminopeptidase"/>
    <property type="match status" value="1"/>
</dbReference>
<dbReference type="Gene3D" id="1.25.50.20">
    <property type="match status" value="1"/>
</dbReference>
<dbReference type="Gene3D" id="2.60.40.1910">
    <property type="match status" value="1"/>
</dbReference>
<dbReference type="Gene3D" id="1.10.390.10">
    <property type="entry name" value="Neutral Protease Domain 2"/>
    <property type="match status" value="1"/>
</dbReference>
<dbReference type="Gene3D" id="2.60.40.1730">
    <property type="entry name" value="tricorn interacting facor f3 domain"/>
    <property type="match status" value="1"/>
</dbReference>
<dbReference type="InterPro" id="IPR045357">
    <property type="entry name" value="Aminopeptidase_N-like_N"/>
</dbReference>
<dbReference type="InterPro" id="IPR042097">
    <property type="entry name" value="Aminopeptidase_N-like_N_sf"/>
</dbReference>
<dbReference type="InterPro" id="IPR024571">
    <property type="entry name" value="ERAP1-like_C_dom"/>
</dbReference>
<dbReference type="InterPro" id="IPR034016">
    <property type="entry name" value="M1_APN-typ"/>
</dbReference>
<dbReference type="InterPro" id="IPR001930">
    <property type="entry name" value="Peptidase_M1"/>
</dbReference>
<dbReference type="InterPro" id="IPR050344">
    <property type="entry name" value="Peptidase_M1_aminopeptidases"/>
</dbReference>
<dbReference type="InterPro" id="IPR014782">
    <property type="entry name" value="Peptidase_M1_dom"/>
</dbReference>
<dbReference type="InterPro" id="IPR027268">
    <property type="entry name" value="Peptidase_M4/M1_CTD_sf"/>
</dbReference>
<dbReference type="PANTHER" id="PTHR11533">
    <property type="entry name" value="PROTEASE M1 ZINC METALLOPROTEASE"/>
    <property type="match status" value="1"/>
</dbReference>
<dbReference type="PANTHER" id="PTHR11533:SF174">
    <property type="entry name" value="PUROMYCIN-SENSITIVE AMINOPEPTIDASE-RELATED"/>
    <property type="match status" value="1"/>
</dbReference>
<dbReference type="Pfam" id="PF11838">
    <property type="entry name" value="ERAP1_C"/>
    <property type="match status" value="1"/>
</dbReference>
<dbReference type="Pfam" id="PF01433">
    <property type="entry name" value="Peptidase_M1"/>
    <property type="match status" value="1"/>
</dbReference>
<dbReference type="Pfam" id="PF17900">
    <property type="entry name" value="Peptidase_M1_N"/>
    <property type="match status" value="1"/>
</dbReference>
<dbReference type="PRINTS" id="PR00756">
    <property type="entry name" value="ALADIPTASE"/>
</dbReference>
<dbReference type="SUPFAM" id="SSF63737">
    <property type="entry name" value="Leukotriene A4 hydrolase N-terminal domain"/>
    <property type="match status" value="1"/>
</dbReference>
<dbReference type="SUPFAM" id="SSF55486">
    <property type="entry name" value="Metalloproteases ('zincins'), catalytic domain"/>
    <property type="match status" value="1"/>
</dbReference>
<dbReference type="PROSITE" id="PS00142">
    <property type="entry name" value="ZINC_PROTEASE"/>
    <property type="match status" value="1"/>
</dbReference>
<protein>
    <recommendedName>
        <fullName>Probable aminopeptidase 2</fullName>
        <ecNumber>3.4.11.-</ecNumber>
    </recommendedName>
</protein>
<sequence length="781" mass="90370">MVSIDKYEIFLDFDFKNLIYKGYEKIYLSTDNEVVLDSVGLNIVSVKTEGKSVPFKISDSQIFIQTGKFDGVLEIEFEGKVKERGLVGIYKAPYDHSYIITTQFESVHAREFIPCIDHPAFKARFKLSVKVDKDLDVISNMPIEDVREEGDKKIVTFQETPRMSTYLLYLGIGKFEEIKDKLGEVDIIVATVPGRISKGKFALDVAKKVIEYYEDYFGIKYQLPKEHLIAIPEFAFGAMENWGAITFRETALLADESSSVQQKMRVASVVAHELAHQWFGDLVTMKWWDDLWLNESFATFMSHKAIAELYKEWDFWGTFINSETSGALFRDSLTTTHPIEAHVTSPEEIEQLFDDISYGKGASILRMIEAYLGDEDFRKGIQIYLNTYKYSNATGSDFWNSLEKGSGKPVSEIVKDWITKDGYPVVYVSVNGSKINLEQERFYLKGNGKNAVYKVPLTLEVNGRKITYLLEKEKDSIDIGSDIKSIKVNIDRTGFYRVYYNDLSLVFNSKLSHLDKWGLFNDYFNFFLAGRVNYTTYESIAKQFMKDDNYLVVDELVSELYYLWRVNRDKYKLLYEVLPYQVKRFSKRKDELSRRTYSYLLSTFAFVDEKFASGLAVAFEKYDTLDPNVKEAVAIAYAVTYGEDAYDELLNKYRSEKFDEEKTRLLYGLLSFREPYLVVNTMSLALTGEIKRQDVARILPYASYNPYSRLALWKWLKTHMEFLRSIYAGTAILGRTLRSVIPFLGLNNAEVVEYFTTNRFPEMEVEIKSGLEILDSLRRII</sequence>
<name>APE2_SULTO</name>
<feature type="chain" id="PRO_0000095109" description="Probable aminopeptidase 2">
    <location>
        <begin position="1"/>
        <end position="781"/>
    </location>
</feature>
<feature type="active site" description="Proton acceptor" evidence="2">
    <location>
        <position position="273"/>
    </location>
</feature>
<feature type="binding site" evidence="1">
    <location>
        <position position="105"/>
    </location>
    <ligand>
        <name>substrate</name>
    </ligand>
</feature>
<feature type="binding site" evidence="1">
    <location>
        <begin position="237"/>
        <end position="241"/>
    </location>
    <ligand>
        <name>substrate</name>
    </ligand>
</feature>
<feature type="binding site" evidence="2">
    <location>
        <position position="272"/>
    </location>
    <ligand>
        <name>Zn(2+)</name>
        <dbReference type="ChEBI" id="CHEBI:29105"/>
        <note>catalytic</note>
    </ligand>
</feature>
<feature type="binding site" evidence="2">
    <location>
        <position position="276"/>
    </location>
    <ligand>
        <name>Zn(2+)</name>
        <dbReference type="ChEBI" id="CHEBI:29105"/>
        <note>catalytic</note>
    </ligand>
</feature>
<feature type="binding site" evidence="2">
    <location>
        <position position="295"/>
    </location>
    <ligand>
        <name>Zn(2+)</name>
        <dbReference type="ChEBI" id="CHEBI:29105"/>
        <note>catalytic</note>
    </ligand>
</feature>
<feature type="site" description="Transition state stabilizer" evidence="1">
    <location>
        <position position="358"/>
    </location>
</feature>
<gene>
    <name type="primary">ape2</name>
    <name type="ordered locus">STK_06230</name>
</gene>
<accession>Q974N6</accession>
<comment type="cofactor">
    <cofactor evidence="1">
        <name>Zn(2+)</name>
        <dbReference type="ChEBI" id="CHEBI:29105"/>
    </cofactor>
    <text evidence="1">Binds 1 zinc ion per subunit.</text>
</comment>
<comment type="subcellular location">
    <subcellularLocation>
        <location evidence="3">Cytoplasm</location>
    </subcellularLocation>
</comment>
<comment type="similarity">
    <text evidence="3">Belongs to the peptidase M1 family.</text>
</comment>
<organism>
    <name type="scientific">Sulfurisphaera tokodaii (strain DSM 16993 / JCM 10545 / NBRC 100140 / 7)</name>
    <name type="common">Sulfolobus tokodaii</name>
    <dbReference type="NCBI Taxonomy" id="273063"/>
    <lineage>
        <taxon>Archaea</taxon>
        <taxon>Thermoproteota</taxon>
        <taxon>Thermoprotei</taxon>
        <taxon>Sulfolobales</taxon>
        <taxon>Sulfolobaceae</taxon>
        <taxon>Sulfurisphaera</taxon>
    </lineage>
</organism>
<proteinExistence type="inferred from homology"/>